<feature type="chain" id="PRO_0000097220" description="Linear element protein rec10">
    <location>
        <begin position="1"/>
        <end position="791"/>
    </location>
</feature>
<feature type="region of interest" description="Disordered" evidence="2">
    <location>
        <begin position="462"/>
        <end position="523"/>
    </location>
</feature>
<feature type="region of interest" description="Disordered" evidence="2">
    <location>
        <begin position="644"/>
        <end position="672"/>
    </location>
</feature>
<feature type="short sequence motif" description="Nuclear localization signal" evidence="1">
    <location>
        <begin position="485"/>
        <end position="492"/>
    </location>
</feature>
<feature type="compositionally biased region" description="Basic residues" evidence="2">
    <location>
        <begin position="493"/>
        <end position="503"/>
    </location>
</feature>
<feature type="compositionally biased region" description="Polar residues" evidence="2">
    <location>
        <begin position="644"/>
        <end position="657"/>
    </location>
</feature>
<feature type="mutagenesis site" description="Decreases meiotic gene conversion at ade6 and leads to abnormal localization of rec25 within the nucleus." evidence="4">
    <original>VIG</original>
    <variation>IID</variation>
    <location>
        <begin position="176"/>
        <end position="178"/>
    </location>
</feature>
<feature type="mutagenesis site" description="Decreases meiotic gene conversion at ade6, crossing-over between ade6 and arg1, and leads to abnormal localization of rec25 to the nucleus." evidence="4">
    <original>RD</original>
    <variation>FT</variation>
    <location>
        <begin position="184"/>
        <end position="185"/>
    </location>
</feature>
<feature type="mutagenesis site" description="Decreases meiotic gene conversion at ade6; when associated with H-434." evidence="4">
    <original>E</original>
    <variation>K</variation>
    <location>
        <position position="271"/>
    </location>
</feature>
<feature type="mutagenesis site" description="Decreases interaction with rec15. Decreases meiotic gene conversion at ade6. Decreases spore viability." evidence="5">
    <original>E</original>
    <variation>A</variation>
    <location>
        <position position="309"/>
    </location>
</feature>
<feature type="mutagenesis site" description="Decreases interaction with hop1. Decreases meiotic gene conversion at ade6." evidence="5">
    <original>PK</original>
    <variation>GG</variation>
    <location>
        <begin position="348"/>
        <end position="349"/>
    </location>
</feature>
<feature type="mutagenesis site" description="Decreases meiotic gene conversion at ade6; when associated with K-271." evidence="4">
    <original>R</original>
    <variation>H</variation>
    <location>
        <position position="434"/>
    </location>
</feature>
<feature type="mutagenesis site" description="Abnormal localization of rec25 within the nucleus." evidence="4">
    <original>G</original>
    <variation>E</variation>
    <location>
        <position position="727"/>
    </location>
</feature>
<feature type="sequence conflict" description="In Ref. 1; AAA99538." evidence="8" ref="1">
    <original>S</original>
    <variation>F</variation>
    <location>
        <position position="202"/>
    </location>
</feature>
<feature type="sequence conflict" description="In Ref. 1; AAA99538." evidence="8" ref="1">
    <original>S</original>
    <variation>A</variation>
    <location>
        <position position="257"/>
    </location>
</feature>
<dbReference type="EMBL" id="U09871">
    <property type="protein sequence ID" value="AAA99538.1"/>
    <property type="status" value="ALT_INIT"/>
    <property type="molecule type" value="Genomic_DNA"/>
</dbReference>
<dbReference type="EMBL" id="CU329670">
    <property type="protein sequence ID" value="CAA94633.1"/>
    <property type="molecule type" value="Genomic_DNA"/>
</dbReference>
<dbReference type="PIR" id="S55725">
    <property type="entry name" value="S55725"/>
</dbReference>
<dbReference type="PIR" id="T52489">
    <property type="entry name" value="T52489"/>
</dbReference>
<dbReference type="RefSeq" id="NP_594524.1">
    <property type="nucleotide sequence ID" value="NM_001019953.2"/>
</dbReference>
<dbReference type="BioGRID" id="278184">
    <property type="interactions" value="18"/>
</dbReference>
<dbReference type="FunCoup" id="Q09823">
    <property type="interactions" value="2"/>
</dbReference>
<dbReference type="STRING" id="284812.Q09823"/>
<dbReference type="PaxDb" id="4896-SPAC25G10.04c.1"/>
<dbReference type="EnsemblFungi" id="SPAC25G10.04c.1">
    <property type="protein sequence ID" value="SPAC25G10.04c.1:pep"/>
    <property type="gene ID" value="SPAC25G10.04c"/>
</dbReference>
<dbReference type="GeneID" id="2541688"/>
<dbReference type="KEGG" id="spo:2541688"/>
<dbReference type="PomBase" id="SPAC25G10.04c">
    <property type="gene designation" value="rec10"/>
</dbReference>
<dbReference type="VEuPathDB" id="FungiDB:SPAC25G10.04c"/>
<dbReference type="HOGENOM" id="CLU_354176_0_0_1"/>
<dbReference type="InParanoid" id="Q09823"/>
<dbReference type="OMA" id="HRDFACR"/>
<dbReference type="PRO" id="PR:Q09823"/>
<dbReference type="Proteomes" id="UP000002485">
    <property type="component" value="Chromosome I"/>
</dbReference>
<dbReference type="GO" id="GO:0000785">
    <property type="term" value="C:chromatin"/>
    <property type="evidence" value="ECO:0000314"/>
    <property type="project" value="PomBase"/>
</dbReference>
<dbReference type="GO" id="GO:0030998">
    <property type="term" value="C:linear element"/>
    <property type="evidence" value="ECO:0000314"/>
    <property type="project" value="PomBase"/>
</dbReference>
<dbReference type="GO" id="GO:0005634">
    <property type="term" value="C:nucleus"/>
    <property type="evidence" value="ECO:0000314"/>
    <property type="project" value="PomBase"/>
</dbReference>
<dbReference type="GO" id="GO:0042138">
    <property type="term" value="P:meiotic DNA double-strand break formation"/>
    <property type="evidence" value="ECO:0000315"/>
    <property type="project" value="PomBase"/>
</dbReference>
<dbReference type="GO" id="GO:0007131">
    <property type="term" value="P:reciprocal meiotic recombination"/>
    <property type="evidence" value="ECO:0000315"/>
    <property type="project" value="PomBase"/>
</dbReference>
<dbReference type="InterPro" id="IPR012491">
    <property type="entry name" value="Red1/Rec10"/>
</dbReference>
<dbReference type="Pfam" id="PF07964">
    <property type="entry name" value="Red1"/>
    <property type="match status" value="1"/>
</dbReference>
<comment type="function">
    <text evidence="5 6 7">Organizes linear element components on chromosomes and is thus required for meiotic DNA recombination.</text>
</comment>
<comment type="subunit">
    <text evidence="3 5">Component of linear elements (LinEs), which are similar to synaptonemal complexes, at least composed of rec27, rec25, rec10 and mug20 (PubMed:23395004). Interacts with rec25; the interaction is direct (PubMed:31665745). Interacts with hop1 (via N-terminus); the interaction is direct (PubMed:31665745). Interacts with rec15 (via C-terminus); the interaction is direct (PubMed:31665745).</text>
</comment>
<comment type="subcellular location">
    <subcellularLocation>
        <location evidence="3 5 6">Nucleus</location>
    </subcellularLocation>
    <subcellularLocation>
        <location evidence="5">Chromosome</location>
    </subcellularLocation>
    <text evidence="5">Localizes to DNA double-strand break (DSB) hotspots.</text>
</comment>
<comment type="developmental stage">
    <text evidence="6 7">Present from pre-meiotic DNA replication and disappears following meiotic prophase I.</text>
</comment>
<comment type="disruption phenotype">
    <text evidence="3 5 6">Abnormal linear element formation (PubMed:23395004, PubMed:33825974). Abolishes localization of hop1 to meiotic chromosomal axis sites and DNA double-strand break (DSB) hotspots (PubMed:31665745). Severely decreases localization of rec15 to chromosomal axis sites (PubMed:31665745). Abnormal sporulation (PubMed:33825974).</text>
</comment>
<comment type="sequence caution" evidence="8">
    <conflict type="erroneous initiation">
        <sequence resource="EMBL-CDS" id="AAA99538"/>
    </conflict>
</comment>
<gene>
    <name evidence="9" type="primary">rec10</name>
    <name evidence="9" type="ORF">SPAC25G10.04c</name>
</gene>
<protein>
    <recommendedName>
        <fullName evidence="8">Linear element protein rec10</fullName>
    </recommendedName>
    <alternativeName>
        <fullName>Meiotic recombination protein rec10</fullName>
    </alternativeName>
</protein>
<evidence type="ECO:0000255" key="1">
    <source>
        <dbReference type="PROSITE-ProRule" id="PRU00768"/>
    </source>
</evidence>
<evidence type="ECO:0000256" key="2">
    <source>
        <dbReference type="SAM" id="MobiDB-lite"/>
    </source>
</evidence>
<evidence type="ECO:0000269" key="3">
    <source>
    </source>
</evidence>
<evidence type="ECO:0000269" key="4">
    <source>
    </source>
</evidence>
<evidence type="ECO:0000269" key="5">
    <source>
    </source>
</evidence>
<evidence type="ECO:0000269" key="6">
    <source>
    </source>
</evidence>
<evidence type="ECO:0000269" key="7">
    <source>
    </source>
</evidence>
<evidence type="ECO:0000305" key="8"/>
<evidence type="ECO:0000312" key="9">
    <source>
        <dbReference type="PomBase" id="SPAC25G10.04c"/>
    </source>
</evidence>
<accession>Q09823</accession>
<reference key="1">
    <citation type="journal article" date="1995" name="Curr. Genet.">
        <title>Molecular cloning of the meiosis-induced rec10 gene of Schizosaccharomyces pombe.</title>
        <authorList>
            <person name="Lin Y."/>
            <person name="Smith G.R."/>
        </authorList>
    </citation>
    <scope>NUCLEOTIDE SEQUENCE [GENOMIC DNA]</scope>
    <scope>FUNCTION</scope>
    <scope>DEVELOPMENTAL STAGE</scope>
</reference>
<reference key="2">
    <citation type="journal article" date="2002" name="Nature">
        <title>The genome sequence of Schizosaccharomyces pombe.</title>
        <authorList>
            <person name="Wood V."/>
            <person name="Gwilliam R."/>
            <person name="Rajandream M.A."/>
            <person name="Lyne M.H."/>
            <person name="Lyne R."/>
            <person name="Stewart A."/>
            <person name="Sgouros J.G."/>
            <person name="Peat N."/>
            <person name="Hayles J."/>
            <person name="Baker S.G."/>
            <person name="Basham D."/>
            <person name="Bowman S."/>
            <person name="Brooks K."/>
            <person name="Brown D."/>
            <person name="Brown S."/>
            <person name="Chillingworth T."/>
            <person name="Churcher C.M."/>
            <person name="Collins M."/>
            <person name="Connor R."/>
            <person name="Cronin A."/>
            <person name="Davis P."/>
            <person name="Feltwell T."/>
            <person name="Fraser A."/>
            <person name="Gentles S."/>
            <person name="Goble A."/>
            <person name="Hamlin N."/>
            <person name="Harris D.E."/>
            <person name="Hidalgo J."/>
            <person name="Hodgson G."/>
            <person name="Holroyd S."/>
            <person name="Hornsby T."/>
            <person name="Howarth S."/>
            <person name="Huckle E.J."/>
            <person name="Hunt S."/>
            <person name="Jagels K."/>
            <person name="James K.D."/>
            <person name="Jones L."/>
            <person name="Jones M."/>
            <person name="Leather S."/>
            <person name="McDonald S."/>
            <person name="McLean J."/>
            <person name="Mooney P."/>
            <person name="Moule S."/>
            <person name="Mungall K.L."/>
            <person name="Murphy L.D."/>
            <person name="Niblett D."/>
            <person name="Odell C."/>
            <person name="Oliver K."/>
            <person name="O'Neil S."/>
            <person name="Pearson D."/>
            <person name="Quail M.A."/>
            <person name="Rabbinowitsch E."/>
            <person name="Rutherford K.M."/>
            <person name="Rutter S."/>
            <person name="Saunders D."/>
            <person name="Seeger K."/>
            <person name="Sharp S."/>
            <person name="Skelton J."/>
            <person name="Simmonds M.N."/>
            <person name="Squares R."/>
            <person name="Squares S."/>
            <person name="Stevens K."/>
            <person name="Taylor K."/>
            <person name="Taylor R.G."/>
            <person name="Tivey A."/>
            <person name="Walsh S.V."/>
            <person name="Warren T."/>
            <person name="Whitehead S."/>
            <person name="Woodward J.R."/>
            <person name="Volckaert G."/>
            <person name="Aert R."/>
            <person name="Robben J."/>
            <person name="Grymonprez B."/>
            <person name="Weltjens I."/>
            <person name="Vanstreels E."/>
            <person name="Rieger M."/>
            <person name="Schaefer M."/>
            <person name="Mueller-Auer S."/>
            <person name="Gabel C."/>
            <person name="Fuchs M."/>
            <person name="Duesterhoeft A."/>
            <person name="Fritzc C."/>
            <person name="Holzer E."/>
            <person name="Moestl D."/>
            <person name="Hilbert H."/>
            <person name="Borzym K."/>
            <person name="Langer I."/>
            <person name="Beck A."/>
            <person name="Lehrach H."/>
            <person name="Reinhardt R."/>
            <person name="Pohl T.M."/>
            <person name="Eger P."/>
            <person name="Zimmermann W."/>
            <person name="Wedler H."/>
            <person name="Wambutt R."/>
            <person name="Purnelle B."/>
            <person name="Goffeau A."/>
            <person name="Cadieu E."/>
            <person name="Dreano S."/>
            <person name="Gloux S."/>
            <person name="Lelaure V."/>
            <person name="Mottier S."/>
            <person name="Galibert F."/>
            <person name="Aves S.J."/>
            <person name="Xiang Z."/>
            <person name="Hunt C."/>
            <person name="Moore K."/>
            <person name="Hurst S.M."/>
            <person name="Lucas M."/>
            <person name="Rochet M."/>
            <person name="Gaillardin C."/>
            <person name="Tallada V.A."/>
            <person name="Garzon A."/>
            <person name="Thode G."/>
            <person name="Daga R.R."/>
            <person name="Cruzado L."/>
            <person name="Jimenez J."/>
            <person name="Sanchez M."/>
            <person name="del Rey F."/>
            <person name="Benito J."/>
            <person name="Dominguez A."/>
            <person name="Revuelta J.L."/>
            <person name="Moreno S."/>
            <person name="Armstrong J."/>
            <person name="Forsburg S.L."/>
            <person name="Cerutti L."/>
            <person name="Lowe T."/>
            <person name="McCombie W.R."/>
            <person name="Paulsen I."/>
            <person name="Potashkin J."/>
            <person name="Shpakovski G.V."/>
            <person name="Ussery D."/>
            <person name="Barrell B.G."/>
            <person name="Nurse P."/>
        </authorList>
    </citation>
    <scope>NUCLEOTIDE SEQUENCE [LARGE SCALE GENOMIC DNA]</scope>
    <source>
        <strain>972 / ATCC 24843</strain>
    </source>
</reference>
<reference key="3">
    <citation type="journal article" date="2013" name="Mol. Cell">
        <title>Protein determinants of meiotic DNA break hot spots.</title>
        <authorList>
            <person name="Fowler K.R."/>
            <person name="Gutierrez-Velasco S."/>
            <person name="Martin-Castellanos C."/>
            <person name="Smith G.R."/>
        </authorList>
    </citation>
    <scope>IDENTIFICATION IN THE LINEAR ELEMENT COMPLEX</scope>
    <scope>SUBCELLULAR LOCATION</scope>
    <scope>DISRUPTION PHENOTYPE</scope>
</reference>
<reference key="4">
    <citation type="journal article" date="2017" name="Sci. Rep.">
        <title>Functional organization of protein determinants of meiotic DNA break hotspots.</title>
        <authorList>
            <person name="Ma L."/>
            <person name="Fowler K.R."/>
            <person name="Martin-Castellanos C."/>
            <person name="Smith G.R."/>
        </authorList>
    </citation>
    <scope>MUTAGENESIS OF 176-VAL--GLY-178; 184-ARG-ASP-185; GLU-271; ARG-434 AND GLY-727</scope>
</reference>
<reference key="5">
    <citation type="journal article" date="2019" name="Nucleic Acids Res.">
        <title>Conserved HORMA domain-containing protein Hop1 stabilizes interaction between proteins of meiotic DNA break hotspots and chromosome axis.</title>
        <authorList>
            <person name="Kariyazono R."/>
            <person name="Oda A."/>
            <person name="Yamada T."/>
            <person name="Ohta K."/>
        </authorList>
    </citation>
    <scope>FUNCTION</scope>
    <scope>INTERACTION WITH HOP1; REC15 AND REC25</scope>
    <scope>SUBCELLULAR LOCATION</scope>
    <scope>DISRUPTION PHENOTYPE</scope>
    <scope>MUTAGENESIS OF GLU-309 AND 348-PRO-LYS-349</scope>
</reference>
<reference key="6">
    <citation type="journal article" date="2021" name="Chromosoma">
        <title>Linear elements are stable structures along the chromosome axis in fission yeast meiosis.</title>
        <authorList>
            <person name="Ding D.Q."/>
            <person name="Matsuda A."/>
            <person name="Okamasa K."/>
            <person name="Hiraoka Y."/>
        </authorList>
    </citation>
    <scope>FUNCTION</scope>
    <scope>SUBCELLULAR LOCATION</scope>
    <scope>DEVELOPMENTAL STAGE</scope>
    <scope>DISRUPTION PHENOTYPE</scope>
</reference>
<keyword id="KW-0158">Chromosome</keyword>
<keyword id="KW-0469">Meiosis</keyword>
<keyword id="KW-0539">Nucleus</keyword>
<keyword id="KW-1185">Reference proteome</keyword>
<name>REC10_SCHPO</name>
<proteinExistence type="evidence at protein level"/>
<sequence>MDIFSEFLNCLSSDGTLNESSIYKTYQILESLNPKDVDTKENYIKLSNTFSTLGSGVGFQDNLLIEMFKILTVLFFKTRSTDLGDLLIESFTSLEIEKLMRVKKTIGSIVLTKGIQELQEIELPKVGFNCMTYDESIFQGISLERLILQLMSIFIAKCEENKLWLVNNRKDLDLRVIGQRLLHRDFACRFLSGLFISRFSVSGDTDESKHQNGIRLQLFIDFSKFETRLTMQILKADRIFSTCVANTVHAYEGLFSSGSNIDSTIATLVLEPRDLIVYRKGFALLQIPWTSVTTIDKIKKVKSLKIITEVSSLDEFVFQCKDGDKFDELFSTSEEIMNKLLPAIIVSPKLTLRNRSIIQIKEGESKLPNTSKQASQNLPHLDDELAYQRFEDQVIDKSVCDDECTNTENTPSSNIPADVKDSLSADDYAYDTKRKTQIEDLEEDQNKSKIASKDGTNLKEINSVPEFSDENVINQTGPAKKTPVQRRKDGKFAKSTKRKKQKSLKPDTENQESSVKNKKAKSNVNLQYSPKTPICKINDETLKPPTIANIAGHKQMNHLTSENIETPVPVPNGNWYNGVKHETATDIFTTCHDGNNSLKSSVWKELLKEKHWKQESKPQLTGNSRQIDLSTFVKQANTPNITSLLDGTCSSPPNNECFNDKEPDSSSSTLISDRQELEYRNPNAETVKLEEIPYNKFFKTVEKNEAYNPSSKSATIDGLQRYTSMIGNQIYEGILQNEKELRSKLEAYHINCNKVIKEFSKRQTARYKIIEKELAQIEVNLVSQIDSLMFK</sequence>
<organism>
    <name type="scientific">Schizosaccharomyces pombe (strain 972 / ATCC 24843)</name>
    <name type="common">Fission yeast</name>
    <dbReference type="NCBI Taxonomy" id="284812"/>
    <lineage>
        <taxon>Eukaryota</taxon>
        <taxon>Fungi</taxon>
        <taxon>Dikarya</taxon>
        <taxon>Ascomycota</taxon>
        <taxon>Taphrinomycotina</taxon>
        <taxon>Schizosaccharomycetes</taxon>
        <taxon>Schizosaccharomycetales</taxon>
        <taxon>Schizosaccharomycetaceae</taxon>
        <taxon>Schizosaccharomyces</taxon>
    </lineage>
</organism>